<dbReference type="EMBL" id="CP000086">
    <property type="status" value="NOT_ANNOTATED_CDS"/>
    <property type="molecule type" value="Genomic_DNA"/>
</dbReference>
<dbReference type="Proteomes" id="UP000001930">
    <property type="component" value="Chromosome I"/>
</dbReference>
<dbReference type="GO" id="GO:0005576">
    <property type="term" value="C:extracellular region"/>
    <property type="evidence" value="ECO:0007669"/>
    <property type="project" value="UniProtKB-SubCell"/>
</dbReference>
<dbReference type="GO" id="GO:0042742">
    <property type="term" value="P:defense response to bacterium"/>
    <property type="evidence" value="ECO:0007669"/>
    <property type="project" value="UniProtKB-KW"/>
</dbReference>
<dbReference type="GO" id="GO:0031640">
    <property type="term" value="P:killing of cells of another organism"/>
    <property type="evidence" value="ECO:0007669"/>
    <property type="project" value="UniProtKB-KW"/>
</dbReference>
<keyword id="KW-0044">Antibiotic</keyword>
<keyword id="KW-0929">Antimicrobial</keyword>
<keyword id="KW-0078">Bacteriocin</keyword>
<keyword id="KW-1017">Isopeptide bond</keyword>
<keyword id="KW-0964">Secreted</keyword>
<organism>
    <name type="scientific">Burkholderia thailandensis (strain ATCC 700388 / DSM 13276 / CCUG 48851 / CIP 106301 / E264)</name>
    <dbReference type="NCBI Taxonomy" id="271848"/>
    <lineage>
        <taxon>Bacteria</taxon>
        <taxon>Pseudomonadati</taxon>
        <taxon>Pseudomonadota</taxon>
        <taxon>Betaproteobacteria</taxon>
        <taxon>Burkholderiales</taxon>
        <taxon>Burkholderiaceae</taxon>
        <taxon>Burkholderia</taxon>
        <taxon>pseudomallei group</taxon>
    </lineage>
</organism>
<proteinExistence type="evidence at protein level"/>
<comment type="function">
    <text evidence="2 4 5">Peptide antibiotic that functions through inhibition of the bacterial DNA-dependent RNA polymerase (RNAP) (PubMed:21396375, PubMed:30626643). Inhibits transcription by binding in RNAP secondary channel, where it sterically blocks the folding of the trigger loop, which is essential for efficient catalysis (PubMed:21396375, PubMed:30626643). In contrast to MccJ25, does not restrict access of nucleotide substrates to the catalytic center and shows a non-competitive mode of inhibition (PubMed:30626643). Shows activity against closely related Gram-negative Burkholderia and Pseudomonas strains (PubMed:18671394). Is not active against Gram-positive bacteria (PubMed:18671394).</text>
</comment>
<comment type="biophysicochemical properties">
    <temperatureDependence>
        <text evidence="3">Highly thermostable.</text>
    </temperatureDependence>
</comment>
<comment type="subcellular location">
    <subcellularLocation>
        <location evidence="1 12">Secreted</location>
    </subcellularLocation>
</comment>
<comment type="domain">
    <text evidence="11">Is composed of a ring composed by 9 residues, and a tail of 10 residues (Probable). The peptide is threaded when the C-terminal tail is inserted throught the isopeptide-bonded ring (Probable).</text>
</comment>
<comment type="PTM">
    <text evidence="12">It is assumed that the two processing enzymes CapB/CapC convert the precursor protein CapA into the mature lasso peptide capistruin. CapB is assumed to cleave the precursor protein CapA and to set an N-terminal Gly free, whose a-NH2 group acts as the nucleophile in the subsequent cyclization reaction. CapC is most likely involved in the side-chain carboxyl group activation of aspartic acid at position 9 generating the electrophile for the condensation reaction. CapD may export capistruin outside of the producing cells.</text>
</comment>
<comment type="mass spectrometry" mass="2050.0" method="Electrospray" evidence="2"/>
<comment type="online information" name="Biological Magnetic Resonance Data Bank">
    <link uri="https://bmrb.io/data_library/summary/index.php?bmrbId=20014"/>
</comment>
<gene>
    <name evidence="7 8" type="primary">CapA</name>
    <name evidence="6" type="ordered locus">BTH_I2437.1</name>
</gene>
<sequence length="47" mass="5013">MVRLLAKLLRSTIHGSNGVSLDAVSSTHGTPGFQTPDARVISRFGFN</sequence>
<reference key="1">
    <citation type="journal article" date="2005" name="BMC Genomics">
        <title>Bacterial genome adaptation to niches: divergence of the potential virulence genes in three Burkholderia species of different survival strategies.</title>
        <authorList>
            <person name="Kim H.S."/>
            <person name="Schell M.A."/>
            <person name="Yu Y."/>
            <person name="Ulrich R.L."/>
            <person name="Sarria S.H."/>
            <person name="Nierman W.C."/>
            <person name="DeShazer D."/>
        </authorList>
    </citation>
    <scope>NUCLEOTIDE SEQUENCE [LARGE SCALE GENOMIC DNA]</scope>
    <source>
        <strain>ATCC 700388 / DSM 13276 / CCUG 48851 / CIP 106301 / E264</strain>
    </source>
</reference>
<reference key="2">
    <citation type="journal article" date="2008" name="J. Am. Chem. Soc.">
        <title>Isolation and structural characterization of capistruin, a lasso peptide predicted from the genome sequence of Burkholderia thailandensis E264.</title>
        <authorList>
            <person name="Knappe T.A."/>
            <person name="Linne U."/>
            <person name="Zirah S."/>
            <person name="Rebuffat S."/>
            <person name="Xie X."/>
            <person name="Marahiel M.A."/>
        </authorList>
    </citation>
    <scope>FUNCTION</scope>
    <scope>MASS SPECTROMETRY</scope>
    <scope>STRUCTURE BY NMR OF 29-47</scope>
    <scope>CROSS-LINK</scope>
    <scope>EXPRESSION IN E.COLI</scope>
    <source>
        <strain>ATCC 700388 / DSM 13276 / CCUG 48851 / CIP 106301 / E264</strain>
    </source>
</reference>
<reference key="3">
    <citation type="journal article" date="2009" name="Chem. Biol.">
        <title>Insights into the biosynthesis and stability of the lasso peptide capistruin.</title>
        <authorList>
            <person name="Knappe T.A."/>
            <person name="Linne U."/>
            <person name="Robbel L."/>
            <person name="Marahiel M.A."/>
        </authorList>
    </citation>
    <scope>MUTAGENESIS OF ARG-43 AND 43-ARG-PHE-44</scope>
    <scope>ALANINE-SCANNING MUTAGENESIS</scope>
    <source>
        <strain>ATCC 700388 / DSM 13276 / CCUG 48851 / CIP 106301 / E264</strain>
    </source>
</reference>
<reference key="4">
    <citation type="journal article" date="2011" name="J. Mol. Biol.">
        <title>The antibacterial threaded-lasso peptide capistruin inhibits bacterial RNA polymerase.</title>
        <authorList>
            <person name="Kuznedelov K."/>
            <person name="Semenova E."/>
            <person name="Knappe T.A."/>
            <person name="Mukhamedyarov D."/>
            <person name="Srivastava A."/>
            <person name="Chatterjee S."/>
            <person name="Ebright R.H."/>
            <person name="Marahiel M.A."/>
            <person name="Severinov K."/>
        </authorList>
    </citation>
    <scope>FUNCTION</scope>
    <source>
        <strain>ATCC 700388 / DSM 13276 / CCUG 48851 / CIP 106301 / E264</strain>
    </source>
</reference>
<reference key="5">
    <citation type="journal article" date="2019" name="Proc. Natl. Acad. Sci. U.S.A.">
        <title>Structural mechanism of transcription inhibition by lasso peptides microcin J25 and capistruin.</title>
        <authorList>
            <person name="Braffman N.R."/>
            <person name="Piscotta F.J."/>
            <person name="Hauver J."/>
            <person name="Campbell E.A."/>
            <person name="Link A.J."/>
            <person name="Darst S.A."/>
        </authorList>
    </citation>
    <scope>X-RAY CRYSTALLOGRAPHY (3.2 ANGSTROMS) OF 29-47 IN COMPLEX WITH E.COLI RNA POLYMERASE</scope>
    <scope>FUNCTION</scope>
</reference>
<name>CAP_BURTA</name>
<feature type="propeptide" id="PRO_0000450653" evidence="2">
    <location>
        <begin position="1"/>
        <end position="28"/>
    </location>
</feature>
<feature type="peptide" id="PRO_0000450654" description="Capistruin" evidence="2">
    <location>
        <begin position="29"/>
        <end position="47"/>
    </location>
</feature>
<feature type="site" description="Basic bulky residue that acts as a plug entrapping the tail within the macrocyclic ring" evidence="12">
    <location>
        <position position="43"/>
    </location>
</feature>
<feature type="cross-link" description="Isoaspartyl glycine isopeptide (Gly-Asp)" evidence="2">
    <location>
        <begin position="29"/>
        <end position="37"/>
    </location>
</feature>
<feature type="mutagenesis site" description="Loss of thermostability. Stays resistance to proteolytic cleavage." evidence="3">
    <original>RF</original>
    <variation>AA</variation>
    <location>
        <begin position="43"/>
        <end position="44"/>
    </location>
</feature>
<feature type="mutagenesis site" description="No change in thermostability." evidence="3">
    <original>R</original>
    <variation>A</variation>
    <location>
        <position position="43"/>
    </location>
</feature>
<accession>P0DQM5</accession>
<evidence type="ECO:0000250" key="1">
    <source>
        <dbReference type="UniProtKB" id="Q9X2V7"/>
    </source>
</evidence>
<evidence type="ECO:0000269" key="2">
    <source>
    </source>
</evidence>
<evidence type="ECO:0000269" key="3">
    <source>
    </source>
</evidence>
<evidence type="ECO:0000269" key="4">
    <source>
    </source>
</evidence>
<evidence type="ECO:0000269" key="5">
    <source>
    </source>
</evidence>
<evidence type="ECO:0000303" key="6">
    <source>
    </source>
</evidence>
<evidence type="ECO:0000303" key="7">
    <source>
    </source>
</evidence>
<evidence type="ECO:0000303" key="8">
    <source>
    </source>
</evidence>
<evidence type="ECO:0000303" key="9">
    <source>
    </source>
</evidence>
<evidence type="ECO:0000303" key="10">
    <source>
    </source>
</evidence>
<evidence type="ECO:0000305" key="11">
    <source>
    </source>
</evidence>
<evidence type="ECO:0000305" key="12">
    <source>
    </source>
</evidence>
<protein>
    <recommendedName>
        <fullName evidence="7 8 10">Capistruin</fullName>
        <shortName evidence="10">Cap</shortName>
    </recommendedName>
    <alternativeName>
        <fullName evidence="7 8 10">Class II lasso peptide</fullName>
    </alternativeName>
    <alternativeName>
        <fullName evidence="8 9">Lariat peptide</fullName>
    </alternativeName>
    <alternativeName>
        <fullName evidence="9 10">Ribosomally synthesized and post-translationally modified peptide</fullName>
        <shortName evidence="9 10">RiPP</shortName>
    </alternativeName>
</protein>